<dbReference type="EC" id="2.3.2.27" evidence="5"/>
<dbReference type="EMBL" id="AC000104">
    <property type="protein sequence ID" value="AAB70441.1"/>
    <property type="molecule type" value="Genomic_DNA"/>
</dbReference>
<dbReference type="EMBL" id="CP002684">
    <property type="protein sequence ID" value="AEE27688.1"/>
    <property type="molecule type" value="Genomic_DNA"/>
</dbReference>
<dbReference type="EMBL" id="BT004287">
    <property type="protein sequence ID" value="AAO42287.1"/>
    <property type="molecule type" value="mRNA"/>
</dbReference>
<dbReference type="EMBL" id="BT006138">
    <property type="protein sequence ID" value="AAP04123.1"/>
    <property type="molecule type" value="mRNA"/>
</dbReference>
<dbReference type="PIR" id="B86175">
    <property type="entry name" value="B86175"/>
</dbReference>
<dbReference type="RefSeq" id="NP_171931.1">
    <property type="nucleotide sequence ID" value="NM_100316.3"/>
</dbReference>
<dbReference type="SMR" id="P93823"/>
<dbReference type="BioGRID" id="24775">
    <property type="interactions" value="9"/>
</dbReference>
<dbReference type="IntAct" id="P93823">
    <property type="interactions" value="3"/>
</dbReference>
<dbReference type="STRING" id="3702.P93823"/>
<dbReference type="iPTMnet" id="P93823"/>
<dbReference type="PaxDb" id="3702-AT1G04360.1"/>
<dbReference type="ProteomicsDB" id="246748"/>
<dbReference type="EnsemblPlants" id="AT1G04360.1">
    <property type="protein sequence ID" value="AT1G04360.1"/>
    <property type="gene ID" value="AT1G04360"/>
</dbReference>
<dbReference type="GeneID" id="839540"/>
<dbReference type="Gramene" id="AT1G04360.1">
    <property type="protein sequence ID" value="AT1G04360.1"/>
    <property type="gene ID" value="AT1G04360"/>
</dbReference>
<dbReference type="KEGG" id="ath:AT1G04360"/>
<dbReference type="Araport" id="AT1G04360"/>
<dbReference type="TAIR" id="AT1G04360">
    <property type="gene designation" value="ATL1"/>
</dbReference>
<dbReference type="eggNOG" id="KOG0800">
    <property type="taxonomic scope" value="Eukaryota"/>
</dbReference>
<dbReference type="HOGENOM" id="CLU_040108_1_0_1"/>
<dbReference type="InParanoid" id="P93823"/>
<dbReference type="OMA" id="NEFFVIE"/>
<dbReference type="PhylomeDB" id="P93823"/>
<dbReference type="UniPathway" id="UPA00143"/>
<dbReference type="PRO" id="PR:P93823"/>
<dbReference type="Proteomes" id="UP000006548">
    <property type="component" value="Chromosome 1"/>
</dbReference>
<dbReference type="ExpressionAtlas" id="P93823">
    <property type="expression patterns" value="baseline and differential"/>
</dbReference>
<dbReference type="GO" id="GO:0016020">
    <property type="term" value="C:membrane"/>
    <property type="evidence" value="ECO:0007669"/>
    <property type="project" value="UniProtKB-SubCell"/>
</dbReference>
<dbReference type="GO" id="GO:0016740">
    <property type="term" value="F:transferase activity"/>
    <property type="evidence" value="ECO:0007669"/>
    <property type="project" value="UniProtKB-KW"/>
</dbReference>
<dbReference type="GO" id="GO:0008270">
    <property type="term" value="F:zinc ion binding"/>
    <property type="evidence" value="ECO:0007669"/>
    <property type="project" value="UniProtKB-KW"/>
</dbReference>
<dbReference type="GO" id="GO:0016567">
    <property type="term" value="P:protein ubiquitination"/>
    <property type="evidence" value="ECO:0007669"/>
    <property type="project" value="UniProtKB-UniPathway"/>
</dbReference>
<dbReference type="CDD" id="cd16461">
    <property type="entry name" value="RING-H2_EL5-like"/>
    <property type="match status" value="1"/>
</dbReference>
<dbReference type="FunFam" id="3.30.40.10:FF:000187">
    <property type="entry name" value="E3 ubiquitin-protein ligase ATL6"/>
    <property type="match status" value="1"/>
</dbReference>
<dbReference type="Gene3D" id="3.30.40.10">
    <property type="entry name" value="Zinc/RING finger domain, C3HC4 (zinc finger)"/>
    <property type="match status" value="1"/>
</dbReference>
<dbReference type="InterPro" id="IPR044600">
    <property type="entry name" value="ATL1/ATL16-like"/>
</dbReference>
<dbReference type="InterPro" id="IPR001841">
    <property type="entry name" value="Znf_RING"/>
</dbReference>
<dbReference type="InterPro" id="IPR013083">
    <property type="entry name" value="Znf_RING/FYVE/PHD"/>
</dbReference>
<dbReference type="PANTHER" id="PTHR46913:SF16">
    <property type="entry name" value="RING-H2 FINGER PROTEIN ATL1"/>
    <property type="match status" value="1"/>
</dbReference>
<dbReference type="PANTHER" id="PTHR46913">
    <property type="entry name" value="RING-H2 FINGER PROTEIN ATL16"/>
    <property type="match status" value="1"/>
</dbReference>
<dbReference type="Pfam" id="PF13639">
    <property type="entry name" value="zf-RING_2"/>
    <property type="match status" value="1"/>
</dbReference>
<dbReference type="SMART" id="SM00184">
    <property type="entry name" value="RING"/>
    <property type="match status" value="1"/>
</dbReference>
<dbReference type="SUPFAM" id="SSF57850">
    <property type="entry name" value="RING/U-box"/>
    <property type="match status" value="1"/>
</dbReference>
<dbReference type="PROSITE" id="PS50089">
    <property type="entry name" value="ZF_RING_2"/>
    <property type="match status" value="1"/>
</dbReference>
<organism>
    <name type="scientific">Arabidopsis thaliana</name>
    <name type="common">Mouse-ear cress</name>
    <dbReference type="NCBI Taxonomy" id="3702"/>
    <lineage>
        <taxon>Eukaryota</taxon>
        <taxon>Viridiplantae</taxon>
        <taxon>Streptophyta</taxon>
        <taxon>Embryophyta</taxon>
        <taxon>Tracheophyta</taxon>
        <taxon>Spermatophyta</taxon>
        <taxon>Magnoliopsida</taxon>
        <taxon>eudicotyledons</taxon>
        <taxon>Gunneridae</taxon>
        <taxon>Pentapetalae</taxon>
        <taxon>rosids</taxon>
        <taxon>malvids</taxon>
        <taxon>Brassicales</taxon>
        <taxon>Brassicaceae</taxon>
        <taxon>Camelineae</taxon>
        <taxon>Arabidopsis</taxon>
    </lineage>
</organism>
<name>ATL1_ARATH</name>
<evidence type="ECO:0000250" key="1"/>
<evidence type="ECO:0000255" key="2"/>
<evidence type="ECO:0000255" key="3">
    <source>
        <dbReference type="PROSITE-ProRule" id="PRU00175"/>
    </source>
</evidence>
<evidence type="ECO:0000256" key="4">
    <source>
        <dbReference type="SAM" id="MobiDB-lite"/>
    </source>
</evidence>
<evidence type="ECO:0000305" key="5"/>
<proteinExistence type="evidence at transcript level"/>
<accession>P93823</accession>
<gene>
    <name type="primary">ATL1</name>
    <name type="ordered locus">At1g04360</name>
    <name type="ORF">F19P19.21</name>
</gene>
<keyword id="KW-0472">Membrane</keyword>
<keyword id="KW-0479">Metal-binding</keyword>
<keyword id="KW-1185">Reference proteome</keyword>
<keyword id="KW-0808">Transferase</keyword>
<keyword id="KW-0812">Transmembrane</keyword>
<keyword id="KW-1133">Transmembrane helix</keyword>
<keyword id="KW-0833">Ubl conjugation pathway</keyword>
<keyword id="KW-0862">Zinc</keyword>
<keyword id="KW-0863">Zinc-finger</keyword>
<protein>
    <recommendedName>
        <fullName>RING-H2 finger protein ATL1</fullName>
        <ecNumber evidence="5">2.3.2.27</ecNumber>
    </recommendedName>
    <alternativeName>
        <fullName evidence="5">RING-type E3 ubiquitin transferase ATL1</fullName>
    </alternativeName>
</protein>
<sequence length="381" mass="42616">MDLTDRRNPFNNLVFPPPPPPPSTTFTSPIFPRTSSSGTNFPILAIAVIGILATAFLLVSYYIFVIKCCLNWHQIDIFRRRRRSSDQNPLMIYSPHEVNRGLDESAIRAIPVFKFKKRDVVAGEEDQSKNSQECSVCLNEFQEDEKLRIIPNCCHVFHIDCIDIWLQGNANCPLCRTSVSCEASFTLDLISAPSSPRENSPHSRNRNLEPGLVLGGDDDFVVIELGASNGNNRESVRNIDFLTEQERVTSNEVSTGNSPKSVSPLPIKFGNRGMYKKERKFHKVTSMGDECIDTRGKDGHFGEIQPIRRSISMDSSVDRQLYLAVQEEISRRNRQIPVAGDGEDSSSSGGGNSRVMKRCFFSFGSSRTSKSSSILPVYLEP</sequence>
<comment type="catalytic activity">
    <reaction evidence="5">
        <text>S-ubiquitinyl-[E2 ubiquitin-conjugating enzyme]-L-cysteine + [acceptor protein]-L-lysine = [E2 ubiquitin-conjugating enzyme]-L-cysteine + N(6)-ubiquitinyl-[acceptor protein]-L-lysine.</text>
        <dbReference type="EC" id="2.3.2.27"/>
    </reaction>
</comment>
<comment type="pathway">
    <text>Protein modification; protein ubiquitination.</text>
</comment>
<comment type="subcellular location">
    <subcellularLocation>
        <location evidence="5">Membrane</location>
        <topology evidence="5">Single-pass membrane protein</topology>
    </subcellularLocation>
</comment>
<comment type="domain">
    <text evidence="1">The RING-type zinc finger domain mediates binding to an E2 ubiquitin-conjugating enzyme.</text>
</comment>
<comment type="similarity">
    <text evidence="5">Belongs to the RING-type zinc finger family. ATL subfamily.</text>
</comment>
<reference key="1">
    <citation type="journal article" date="2000" name="Nature">
        <title>Sequence and analysis of chromosome 1 of the plant Arabidopsis thaliana.</title>
        <authorList>
            <person name="Theologis A."/>
            <person name="Ecker J.R."/>
            <person name="Palm C.J."/>
            <person name="Federspiel N.A."/>
            <person name="Kaul S."/>
            <person name="White O."/>
            <person name="Alonso J."/>
            <person name="Altafi H."/>
            <person name="Araujo R."/>
            <person name="Bowman C.L."/>
            <person name="Brooks S.Y."/>
            <person name="Buehler E."/>
            <person name="Chan A."/>
            <person name="Chao Q."/>
            <person name="Chen H."/>
            <person name="Cheuk R.F."/>
            <person name="Chin C.W."/>
            <person name="Chung M.K."/>
            <person name="Conn L."/>
            <person name="Conway A.B."/>
            <person name="Conway A.R."/>
            <person name="Creasy T.H."/>
            <person name="Dewar K."/>
            <person name="Dunn P."/>
            <person name="Etgu P."/>
            <person name="Feldblyum T.V."/>
            <person name="Feng J.-D."/>
            <person name="Fong B."/>
            <person name="Fujii C.Y."/>
            <person name="Gill J.E."/>
            <person name="Goldsmith A.D."/>
            <person name="Haas B."/>
            <person name="Hansen N.F."/>
            <person name="Hughes B."/>
            <person name="Huizar L."/>
            <person name="Hunter J.L."/>
            <person name="Jenkins J."/>
            <person name="Johnson-Hopson C."/>
            <person name="Khan S."/>
            <person name="Khaykin E."/>
            <person name="Kim C.J."/>
            <person name="Koo H.L."/>
            <person name="Kremenetskaia I."/>
            <person name="Kurtz D.B."/>
            <person name="Kwan A."/>
            <person name="Lam B."/>
            <person name="Langin-Hooper S."/>
            <person name="Lee A."/>
            <person name="Lee J.M."/>
            <person name="Lenz C.A."/>
            <person name="Li J.H."/>
            <person name="Li Y.-P."/>
            <person name="Lin X."/>
            <person name="Liu S.X."/>
            <person name="Liu Z.A."/>
            <person name="Luros J.S."/>
            <person name="Maiti R."/>
            <person name="Marziali A."/>
            <person name="Militscher J."/>
            <person name="Miranda M."/>
            <person name="Nguyen M."/>
            <person name="Nierman W.C."/>
            <person name="Osborne B.I."/>
            <person name="Pai G."/>
            <person name="Peterson J."/>
            <person name="Pham P.K."/>
            <person name="Rizzo M."/>
            <person name="Rooney T."/>
            <person name="Rowley D."/>
            <person name="Sakano H."/>
            <person name="Salzberg S.L."/>
            <person name="Schwartz J.R."/>
            <person name="Shinn P."/>
            <person name="Southwick A.M."/>
            <person name="Sun H."/>
            <person name="Tallon L.J."/>
            <person name="Tambunga G."/>
            <person name="Toriumi M.J."/>
            <person name="Town C.D."/>
            <person name="Utterback T."/>
            <person name="Van Aken S."/>
            <person name="Vaysberg M."/>
            <person name="Vysotskaia V.S."/>
            <person name="Walker M."/>
            <person name="Wu D."/>
            <person name="Yu G."/>
            <person name="Fraser C.M."/>
            <person name="Venter J.C."/>
            <person name="Davis R.W."/>
        </authorList>
    </citation>
    <scope>NUCLEOTIDE SEQUENCE [LARGE SCALE GENOMIC DNA]</scope>
    <source>
        <strain>cv. Columbia</strain>
    </source>
</reference>
<reference key="2">
    <citation type="journal article" date="2017" name="Plant J.">
        <title>Araport11: a complete reannotation of the Arabidopsis thaliana reference genome.</title>
        <authorList>
            <person name="Cheng C.Y."/>
            <person name="Krishnakumar V."/>
            <person name="Chan A.P."/>
            <person name="Thibaud-Nissen F."/>
            <person name="Schobel S."/>
            <person name="Town C.D."/>
        </authorList>
    </citation>
    <scope>GENOME REANNOTATION</scope>
    <source>
        <strain>cv. Columbia</strain>
    </source>
</reference>
<reference key="3">
    <citation type="journal article" date="2003" name="Science">
        <title>Empirical analysis of transcriptional activity in the Arabidopsis genome.</title>
        <authorList>
            <person name="Yamada K."/>
            <person name="Lim J."/>
            <person name="Dale J.M."/>
            <person name="Chen H."/>
            <person name="Shinn P."/>
            <person name="Palm C.J."/>
            <person name="Southwick A.M."/>
            <person name="Wu H.C."/>
            <person name="Kim C.J."/>
            <person name="Nguyen M."/>
            <person name="Pham P.K."/>
            <person name="Cheuk R.F."/>
            <person name="Karlin-Newmann G."/>
            <person name="Liu S.X."/>
            <person name="Lam B."/>
            <person name="Sakano H."/>
            <person name="Wu T."/>
            <person name="Yu G."/>
            <person name="Miranda M."/>
            <person name="Quach H.L."/>
            <person name="Tripp M."/>
            <person name="Chang C.H."/>
            <person name="Lee J.M."/>
            <person name="Toriumi M.J."/>
            <person name="Chan M.M."/>
            <person name="Tang C.C."/>
            <person name="Onodera C.S."/>
            <person name="Deng J.M."/>
            <person name="Akiyama K."/>
            <person name="Ansari Y."/>
            <person name="Arakawa T."/>
            <person name="Banh J."/>
            <person name="Banno F."/>
            <person name="Bowser L."/>
            <person name="Brooks S.Y."/>
            <person name="Carninci P."/>
            <person name="Chao Q."/>
            <person name="Choy N."/>
            <person name="Enju A."/>
            <person name="Goldsmith A.D."/>
            <person name="Gurjal M."/>
            <person name="Hansen N.F."/>
            <person name="Hayashizaki Y."/>
            <person name="Johnson-Hopson C."/>
            <person name="Hsuan V.W."/>
            <person name="Iida K."/>
            <person name="Karnes M."/>
            <person name="Khan S."/>
            <person name="Koesema E."/>
            <person name="Ishida J."/>
            <person name="Jiang P.X."/>
            <person name="Jones T."/>
            <person name="Kawai J."/>
            <person name="Kamiya A."/>
            <person name="Meyers C."/>
            <person name="Nakajima M."/>
            <person name="Narusaka M."/>
            <person name="Seki M."/>
            <person name="Sakurai T."/>
            <person name="Satou M."/>
            <person name="Tamse R."/>
            <person name="Vaysberg M."/>
            <person name="Wallender E.K."/>
            <person name="Wong C."/>
            <person name="Yamamura Y."/>
            <person name="Yuan S."/>
            <person name="Shinozaki K."/>
            <person name="Davis R.W."/>
            <person name="Theologis A."/>
            <person name="Ecker J.R."/>
        </authorList>
    </citation>
    <scope>NUCLEOTIDE SEQUENCE [LARGE SCALE MRNA]</scope>
    <source>
        <strain>cv. Columbia</strain>
    </source>
</reference>
<reference key="4">
    <citation type="journal article" date="2002" name="Genome Biol.">
        <title>Evaluation and classification of RING-finger domains encoded by the Arabidopsis genome.</title>
        <authorList>
            <person name="Kosarev P."/>
            <person name="Mayer K.F.X."/>
            <person name="Hardtke C.S."/>
        </authorList>
    </citation>
    <scope>GENE FAMILY ORGANIZATION</scope>
</reference>
<reference key="5">
    <citation type="journal article" date="2006" name="J. Mol. Evol.">
        <title>The ATL gene family from Arabidopsis thaliana and Oryza sativa comprises a large number of putative ubiquitin ligases of the RING-H2 type.</title>
        <authorList>
            <person name="Serrano M."/>
            <person name="Parra S."/>
            <person name="Alcaraz L.D."/>
            <person name="Guzman P."/>
        </authorList>
    </citation>
    <scope>NOMENCLATURE</scope>
    <scope>GENE FAMILY ORGANIZATION</scope>
</reference>
<feature type="chain" id="PRO_0000055761" description="RING-H2 finger protein ATL1">
    <location>
        <begin position="1"/>
        <end position="381"/>
    </location>
</feature>
<feature type="transmembrane region" description="Helical" evidence="2">
    <location>
        <begin position="46"/>
        <end position="66"/>
    </location>
</feature>
<feature type="zinc finger region" description="RING-type; atypical" evidence="3">
    <location>
        <begin position="134"/>
        <end position="176"/>
    </location>
</feature>
<feature type="region of interest" description="Disordered" evidence="4">
    <location>
        <begin position="1"/>
        <end position="31"/>
    </location>
</feature>
<feature type="region of interest" description="Disordered" evidence="4">
    <location>
        <begin position="249"/>
        <end position="269"/>
    </location>
</feature>
<feature type="region of interest" description="Disordered" evidence="4">
    <location>
        <begin position="334"/>
        <end position="354"/>
    </location>
</feature>
<feature type="compositionally biased region" description="Polar residues" evidence="4">
    <location>
        <begin position="250"/>
        <end position="261"/>
    </location>
</feature>